<evidence type="ECO:0000250" key="1">
    <source>
        <dbReference type="UniProtKB" id="P53045"/>
    </source>
</evidence>
<evidence type="ECO:0000250" key="2">
    <source>
        <dbReference type="UniProtKB" id="Q4WBI8"/>
    </source>
</evidence>
<evidence type="ECO:0000255" key="3"/>
<evidence type="ECO:0000269" key="4">
    <source>
    </source>
</evidence>
<evidence type="ECO:0000303" key="5">
    <source>
    </source>
</evidence>
<evidence type="ECO:0000305" key="6"/>
<evidence type="ECO:0000305" key="7">
    <source>
    </source>
</evidence>
<protein>
    <recommendedName>
        <fullName evidence="5">C-4 methylsterol oxidase ERG25</fullName>
        <ecNumber evidence="2">1.14.18.-</ecNumber>
    </recommendedName>
    <alternativeName>
        <fullName evidence="5">Ergosterol biosynthetic protein 25</fullName>
    </alternativeName>
    <alternativeName>
        <fullName evidence="6">Sterol-C4-methyl oxidase ERG25</fullName>
        <shortName evidence="6">SMO</shortName>
    </alternativeName>
</protein>
<feature type="chain" id="PRO_0000454363" description="C-4 methylsterol oxidase ERG25">
    <location>
        <begin position="1"/>
        <end position="246"/>
    </location>
</feature>
<feature type="transmembrane region" description="Helical" evidence="3">
    <location>
        <begin position="19"/>
        <end position="39"/>
    </location>
</feature>
<feature type="domain" description="Fatty acid hydroxylase" evidence="3">
    <location>
        <begin position="112"/>
        <end position="235"/>
    </location>
</feature>
<feature type="short sequence motif" description="Histidine box-1" evidence="1">
    <location>
        <begin position="127"/>
        <end position="131"/>
    </location>
</feature>
<feature type="short sequence motif" description="Histidine box-2" evidence="1">
    <location>
        <begin position="140"/>
        <end position="144"/>
    </location>
</feature>
<feature type="short sequence motif" description="Histidine box-3" evidence="1">
    <location>
        <begin position="210"/>
        <end position="216"/>
    </location>
</feature>
<proteinExistence type="inferred from homology"/>
<reference key="1">
    <citation type="journal article" date="2007" name="Science">
        <title>The Fusarium graminearum genome reveals a link between localized polymorphism and pathogen specialization.</title>
        <authorList>
            <person name="Cuomo C.A."/>
            <person name="Gueldener U."/>
            <person name="Xu J.-R."/>
            <person name="Trail F."/>
            <person name="Turgeon B.G."/>
            <person name="Di Pietro A."/>
            <person name="Walton J.D."/>
            <person name="Ma L.-J."/>
            <person name="Baker S.E."/>
            <person name="Rep M."/>
            <person name="Adam G."/>
            <person name="Antoniw J."/>
            <person name="Baldwin T."/>
            <person name="Calvo S.E."/>
            <person name="Chang Y.-L."/>
            <person name="DeCaprio D."/>
            <person name="Gale L.R."/>
            <person name="Gnerre S."/>
            <person name="Goswami R.S."/>
            <person name="Hammond-Kosack K."/>
            <person name="Harris L.J."/>
            <person name="Hilburn K."/>
            <person name="Kennell J.C."/>
            <person name="Kroken S."/>
            <person name="Magnuson J.K."/>
            <person name="Mannhaupt G."/>
            <person name="Mauceli E.W."/>
            <person name="Mewes H.-W."/>
            <person name="Mitterbauer R."/>
            <person name="Muehlbauer G."/>
            <person name="Muensterkoetter M."/>
            <person name="Nelson D."/>
            <person name="O'Donnell K."/>
            <person name="Ouellet T."/>
            <person name="Qi W."/>
            <person name="Quesneville H."/>
            <person name="Roncero M.I.G."/>
            <person name="Seong K.-Y."/>
            <person name="Tetko I.V."/>
            <person name="Urban M."/>
            <person name="Waalwijk C."/>
            <person name="Ward T.J."/>
            <person name="Yao J."/>
            <person name="Birren B.W."/>
            <person name="Kistler H.C."/>
        </authorList>
    </citation>
    <scope>NUCLEOTIDE SEQUENCE [LARGE SCALE GENOMIC DNA]</scope>
    <source>
        <strain>ATCC MYA-4620 / CBS 123657 / FGSC 9075 / NRRL 31084 / PH-1</strain>
    </source>
</reference>
<reference key="2">
    <citation type="journal article" date="2010" name="Nature">
        <title>Comparative genomics reveals mobile pathogenicity chromosomes in Fusarium.</title>
        <authorList>
            <person name="Ma L.-J."/>
            <person name="van der Does H.C."/>
            <person name="Borkovich K.A."/>
            <person name="Coleman J.J."/>
            <person name="Daboussi M.-J."/>
            <person name="Di Pietro A."/>
            <person name="Dufresne M."/>
            <person name="Freitag M."/>
            <person name="Grabherr M."/>
            <person name="Henrissat B."/>
            <person name="Houterman P.M."/>
            <person name="Kang S."/>
            <person name="Shim W.-B."/>
            <person name="Woloshuk C."/>
            <person name="Xie X."/>
            <person name="Xu J.-R."/>
            <person name="Antoniw J."/>
            <person name="Baker S.E."/>
            <person name="Bluhm B.H."/>
            <person name="Breakspear A."/>
            <person name="Brown D.W."/>
            <person name="Butchko R.A.E."/>
            <person name="Chapman S."/>
            <person name="Coulson R."/>
            <person name="Coutinho P.M."/>
            <person name="Danchin E.G.J."/>
            <person name="Diener A."/>
            <person name="Gale L.R."/>
            <person name="Gardiner D.M."/>
            <person name="Goff S."/>
            <person name="Hammond-Kosack K.E."/>
            <person name="Hilburn K."/>
            <person name="Hua-Van A."/>
            <person name="Jonkers W."/>
            <person name="Kazan K."/>
            <person name="Kodira C.D."/>
            <person name="Koehrsen M."/>
            <person name="Kumar L."/>
            <person name="Lee Y.-H."/>
            <person name="Li L."/>
            <person name="Manners J.M."/>
            <person name="Miranda-Saavedra D."/>
            <person name="Mukherjee M."/>
            <person name="Park G."/>
            <person name="Park J."/>
            <person name="Park S.-Y."/>
            <person name="Proctor R.H."/>
            <person name="Regev A."/>
            <person name="Ruiz-Roldan M.C."/>
            <person name="Sain D."/>
            <person name="Sakthikumar S."/>
            <person name="Sykes S."/>
            <person name="Schwartz D.C."/>
            <person name="Turgeon B.G."/>
            <person name="Wapinski I."/>
            <person name="Yoder O."/>
            <person name="Young S."/>
            <person name="Zeng Q."/>
            <person name="Zhou S."/>
            <person name="Galagan J."/>
            <person name="Cuomo C.A."/>
            <person name="Kistler H.C."/>
            <person name="Rep M."/>
        </authorList>
    </citation>
    <scope>GENOME REANNOTATION</scope>
    <source>
        <strain>ATCC MYA-4620 / CBS 123657 / FGSC 9075 / NRRL 31084 / PH-1</strain>
    </source>
</reference>
<reference key="3">
    <citation type="journal article" date="2015" name="BMC Genomics">
        <title>The completed genome sequence of the pathogenic ascomycete fungus Fusarium graminearum.</title>
        <authorList>
            <person name="King R."/>
            <person name="Urban M."/>
            <person name="Hammond-Kosack M.C.U."/>
            <person name="Hassani-Pak K."/>
            <person name="Hammond-Kosack K.E."/>
        </authorList>
    </citation>
    <scope>NUCLEOTIDE SEQUENCE [LARGE SCALE GENOMIC DNA]</scope>
    <source>
        <strain>ATCC MYA-4620 / CBS 123657 / FGSC 9075 / NRRL 31084 / PH-1</strain>
    </source>
</reference>
<reference key="4">
    <citation type="journal article" date="2013" name="New Phytol.">
        <title>Characterization of the sterol 14alpha-demethylases of Fusarium graminearum identifies a novel genus-specific CYP51 function.</title>
        <authorList>
            <person name="Fan J."/>
            <person name="Urban M."/>
            <person name="Parker J.E."/>
            <person name="Brewer H.C."/>
            <person name="Kelly S.L."/>
            <person name="Hammond-Kosack K.E."/>
            <person name="Fraaije B.A."/>
            <person name="Liu X."/>
            <person name="Cools H.J."/>
        </authorList>
    </citation>
    <scope>FUNCTION</scope>
    <scope>PATHWAY</scope>
</reference>
<keyword id="KW-0256">Endoplasmic reticulum</keyword>
<keyword id="KW-0444">Lipid biosynthesis</keyword>
<keyword id="KW-0443">Lipid metabolism</keyword>
<keyword id="KW-0472">Membrane</keyword>
<keyword id="KW-0520">NAD</keyword>
<keyword id="KW-0560">Oxidoreductase</keyword>
<keyword id="KW-1185">Reference proteome</keyword>
<keyword id="KW-0752">Steroid biosynthesis</keyword>
<keyword id="KW-0753">Steroid metabolism</keyword>
<keyword id="KW-0756">Sterol biosynthesis</keyword>
<keyword id="KW-1207">Sterol metabolism</keyword>
<keyword id="KW-0812">Transmembrane</keyword>
<keyword id="KW-1133">Transmembrane helix</keyword>
<comment type="function">
    <text evidence="2 7">C-4 methylsterol oxidase; part of the third module of ergosterol biosynthesis pathway that includes the late steps of the pathway (By similarity). ERG25 is a catalytic component of the C-4 demethylation complex that catalyzes the conversion of 4,4-dimethylfecosterol into fecosterol via 4-methylfecosterol (By similarity). The third module or late pathway involves the ergosterol synthesis itself through consecutive reactions that mainly occur in the endoplasmic reticulum (ER) membrane. Firstly, the squalene synthase ERG9 catalyzes the condensation of 2 farnesyl pyrophosphate moieties to form squalene, which is the precursor of all steroids. Squalene synthase is crucial for balancing the incorporation of farnesyl diphosphate (FPP) into sterol and nonsterol isoprene synthesis. Secondly, squalene is converted into lanosterol by the consecutive action of the squalene epoxidase ERG1 and the lanosterol synthase ERG7. Then, the delta(24)-sterol C-methyltransferase ERG6 methylates lanosterol at C-24 to produce eburicol. Eburicol is the substrate of the sterol 14-alpha demethylase encoded by CYP51A, CYP51B and CYP51C, to yield 4,4,24-trimethyl ergosta-8,14,24(28)-trienol. CYP51B encodes the enzyme primarily responsible for sterol 14-alpha-demethylation, and plays an essential role in ascospore formation. CYP51A encodes an additional sterol 14-alpha-demethylase, induced on ergosterol depletion and responsible for the intrinsic variation in azole sensitivity. The third CYP51 isoform, CYP51C, does not encode a sterol 14-alpha-demethylase, but is required for full virulence on host wheat ears. The C-14 reductase ERG24 then reduces the C14=C15 double bond which leads to 4,4-dimethylfecosterol. A sequence of further demethylations at C-4, involving the C-4 demethylation complex containing the C-4 methylsterol oxidases ERG25, the sterol-4-alpha-carboxylate 3-dehydrogenase ERG26 and the 3-keto-steroid reductase ERG27, leads to the production of fecosterol via 4-methylfecosterol. ERG28 has a role as a scaffold to help anchor ERG25, ERG26 and ERG27 to the endoplasmic reticulum. The C-8 sterol isomerase ERG2 then catalyzes the reaction which results in unsaturation at C-7 in the B ring of sterols and thus converts fecosterol to episterol. The sterol-C5-desaturases ERG3A and ERG3BB then catalyze the introduction of a C-5 double bond in the B ring to produce 5-dehydroepisterol. The C-22 sterol desaturases ERG5A and ERG5B further convert 5-dehydroepisterol into ergosta-5,7,22,24(28)-tetraen-3beta-ol by forming the C-22(23) double bond in the sterol side chain. Finally, ergosta-5,7,22,24(28)-tetraen-3beta-ol is substrate of the C-24(28) sterol reductase ERG4 to produce ergosterol (Probable).</text>
</comment>
<comment type="cofactor">
    <cofactor evidence="1">
        <name>Fe cation</name>
        <dbReference type="ChEBI" id="CHEBI:24875"/>
    </cofactor>
</comment>
<comment type="pathway">
    <text evidence="7">Steroid metabolism; ergosterol biosynthesis.</text>
</comment>
<comment type="subunit">
    <text evidence="1">Heterotetramer of ERG25, ERG26, ERG27 and ERG28 (By similarity). ERG28 acts as a scaffold to tether ERG27 and other 4,4-demethylation-related enzymes, forming a demethylation enzyme complex, in the endoplasmic reticulum (By similarity).</text>
</comment>
<comment type="subcellular location">
    <subcellularLocation>
        <location evidence="1">Endoplasmic reticulum membrane</location>
        <topology evidence="3">Single-pass membrane protein</topology>
    </subcellularLocation>
</comment>
<comment type="domain">
    <text evidence="1">The histidine box domains may contain the active site and/or be involved in metal ion binding.</text>
</comment>
<comment type="miscellaneous">
    <text evidence="4">In Fusarium, the biosynthesis pathway of the sterol precursors leading to the prevalent sterol ergosterol differs from yeast. The ringsystem of lanosterol in S.cerevisiae is firstly demethylised in three enzymatic steps leading to the intermediate zymosterol and secondly a methyl group is added to zymosterol by the sterol 24-C-methyltransferase to form fecosterol. In Fusarium, lanosterol is firstly transmethylated by the sterol 24-C-methyltransferase leading to the intermediate eburicol and secondly demethylated in three steps to form fecosterol.</text>
</comment>
<comment type="similarity">
    <text evidence="6">Belongs to the sterol desaturase family.</text>
</comment>
<accession>I1S1Q3</accession>
<accession>A0A098DDU9</accession>
<name>ERG25_GIBZE</name>
<dbReference type="EC" id="1.14.18.-" evidence="2"/>
<dbReference type="EMBL" id="HG970332">
    <property type="protein sequence ID" value="CEF76131.1"/>
    <property type="molecule type" value="Genomic_DNA"/>
</dbReference>
<dbReference type="RefSeq" id="XP_011319675.1">
    <property type="nucleotide sequence ID" value="XM_011321373.1"/>
</dbReference>
<dbReference type="SMR" id="I1S1Q3"/>
<dbReference type="STRING" id="229533.I1S1Q3"/>
<dbReference type="KEGG" id="fgr:FGSG_10666"/>
<dbReference type="VEuPathDB" id="FungiDB:FGRAMPH1_01G08657"/>
<dbReference type="eggNOG" id="KOG0873">
    <property type="taxonomic scope" value="Eukaryota"/>
</dbReference>
<dbReference type="HOGENOM" id="CLU_047036_1_0_1"/>
<dbReference type="InParanoid" id="I1S1Q3"/>
<dbReference type="OrthoDB" id="71968at110618"/>
<dbReference type="UniPathway" id="UPA00768"/>
<dbReference type="Proteomes" id="UP000070720">
    <property type="component" value="Chromosome 1"/>
</dbReference>
<dbReference type="GO" id="GO:0005789">
    <property type="term" value="C:endoplasmic reticulum membrane"/>
    <property type="evidence" value="ECO:0007669"/>
    <property type="project" value="UniProtKB-SubCell"/>
</dbReference>
<dbReference type="GO" id="GO:0005506">
    <property type="term" value="F:iron ion binding"/>
    <property type="evidence" value="ECO:0007669"/>
    <property type="project" value="InterPro"/>
</dbReference>
<dbReference type="GO" id="GO:0016491">
    <property type="term" value="F:oxidoreductase activity"/>
    <property type="evidence" value="ECO:0007669"/>
    <property type="project" value="UniProtKB-KW"/>
</dbReference>
<dbReference type="GO" id="GO:0016126">
    <property type="term" value="P:sterol biosynthetic process"/>
    <property type="evidence" value="ECO:0007669"/>
    <property type="project" value="UniProtKB-UniPathway"/>
</dbReference>
<dbReference type="InterPro" id="IPR006694">
    <property type="entry name" value="Fatty_acid_hydroxylase"/>
</dbReference>
<dbReference type="InterPro" id="IPR050307">
    <property type="entry name" value="Sterol_Desaturase_Related"/>
</dbReference>
<dbReference type="PANTHER" id="PTHR11863">
    <property type="entry name" value="STEROL DESATURASE"/>
    <property type="match status" value="1"/>
</dbReference>
<dbReference type="Pfam" id="PF04116">
    <property type="entry name" value="FA_hydroxylase"/>
    <property type="match status" value="1"/>
</dbReference>
<organism>
    <name type="scientific">Gibberella zeae (strain ATCC MYA-4620 / CBS 123657 / FGSC 9075 / NRRL 31084 / PH-1)</name>
    <name type="common">Wheat head blight fungus</name>
    <name type="synonym">Fusarium graminearum</name>
    <dbReference type="NCBI Taxonomy" id="229533"/>
    <lineage>
        <taxon>Eukaryota</taxon>
        <taxon>Fungi</taxon>
        <taxon>Dikarya</taxon>
        <taxon>Ascomycota</taxon>
        <taxon>Pezizomycotina</taxon>
        <taxon>Sordariomycetes</taxon>
        <taxon>Hypocreomycetidae</taxon>
        <taxon>Hypocreales</taxon>
        <taxon>Nectriaceae</taxon>
        <taxon>Fusarium</taxon>
    </lineage>
</organism>
<sequence>MSGLWAQVVTQYGTFKVEIIGSLAIQVLFWWVPSAGFVLLDRLAPSFAAKHKIQPAPKQPTSSEIFDAVLISFRNQLIITGLQVTPAILSTRSSAFQITPSLPSTKDFILHFLICLIAREILFYYAHRLLHLPYLYRRIHKIHHKFTAPVSFASQYAHPVEHIVANTIPIVLPPVLLQTHILTMWAFVSWQLIETATVHSGYDFFGGAAYRHDRHHERFNVHFGGMPWLDRLHGTDEIEGLVKKHN</sequence>
<gene>
    <name evidence="5" type="primary">ERG25</name>
    <name type="ORF">FG10666</name>
    <name type="ORF">FGRAMPH1_01T08657</name>
</gene>